<protein>
    <recommendedName>
        <fullName>Cyclin-dependent kinase inhibitor 5</fullName>
    </recommendedName>
    <alternativeName>
        <fullName>Inhibitor/interactor of CDK protein 3</fullName>
    </alternativeName>
    <alternativeName>
        <fullName>KIP-related protein 5</fullName>
    </alternativeName>
</protein>
<evidence type="ECO:0000256" key="1">
    <source>
        <dbReference type="SAM" id="MobiDB-lite"/>
    </source>
</evidence>
<evidence type="ECO:0000269" key="2">
    <source>
    </source>
</evidence>
<evidence type="ECO:0000269" key="3">
    <source>
    </source>
</evidence>
<evidence type="ECO:0000269" key="4">
    <source>
    </source>
</evidence>
<evidence type="ECO:0000305" key="5"/>
<name>KRP5_ARATH</name>
<reference key="1">
    <citation type="journal article" date="2001" name="Plant Cell">
        <title>Functional analysis of cyclin-dependent kinase inhibitors of Arabidopsis.</title>
        <authorList>
            <person name="de Veylder L."/>
            <person name="Beeckman T."/>
            <person name="Beemster G.T.S."/>
            <person name="Krols L."/>
            <person name="Terras F."/>
            <person name="Landrieu I."/>
            <person name="van der Schueren E."/>
            <person name="Maes S."/>
            <person name="Naudts M."/>
            <person name="Inze D."/>
        </authorList>
    </citation>
    <scope>NUCLEOTIDE SEQUENCE [MRNA]</scope>
    <scope>TISSUE SPECIFICITY</scope>
    <scope>INTERACTION WITH CYCD4-1</scope>
    <source>
        <strain>cv. Columbia</strain>
    </source>
</reference>
<reference key="2">
    <citation type="journal article" date="2000" name="DNA Res.">
        <title>Structural analysis of Arabidopsis thaliana chromosome 3. I. Sequence features of the regions of 4,504,864 bp covered by sixty P1 and TAC clones.</title>
        <authorList>
            <person name="Sato S."/>
            <person name="Nakamura Y."/>
            <person name="Kaneko T."/>
            <person name="Katoh T."/>
            <person name="Asamizu E."/>
            <person name="Tabata S."/>
        </authorList>
    </citation>
    <scope>NUCLEOTIDE SEQUENCE [LARGE SCALE GENOMIC DNA]</scope>
    <source>
        <strain>cv. Columbia</strain>
    </source>
</reference>
<reference key="3">
    <citation type="journal article" date="2017" name="Plant J.">
        <title>Araport11: a complete reannotation of the Arabidopsis thaliana reference genome.</title>
        <authorList>
            <person name="Cheng C.Y."/>
            <person name="Krishnakumar V."/>
            <person name="Chan A.P."/>
            <person name="Thibaud-Nissen F."/>
            <person name="Schobel S."/>
            <person name="Town C.D."/>
        </authorList>
    </citation>
    <scope>GENOME REANNOTATION</scope>
    <source>
        <strain>cv. Columbia</strain>
    </source>
</reference>
<reference key="4">
    <citation type="submission" date="2006-06" db="EMBL/GenBank/DDBJ databases">
        <title>Arabidopsis ORF clones.</title>
        <authorList>
            <person name="Kim C.J."/>
            <person name="Chen H."/>
            <person name="Quinitio C."/>
            <person name="Shinn P."/>
            <person name="Ecker J.R."/>
        </authorList>
    </citation>
    <scope>NUCLEOTIDE SEQUENCE [LARGE SCALE MRNA]</scope>
    <source>
        <strain>cv. Columbia</strain>
    </source>
</reference>
<reference key="5">
    <citation type="submission" date="2006-07" db="EMBL/GenBank/DDBJ databases">
        <title>Large-scale analysis of RIKEN Arabidopsis full-length (RAFL) cDNAs.</title>
        <authorList>
            <person name="Totoki Y."/>
            <person name="Seki M."/>
            <person name="Ishida J."/>
            <person name="Nakajima M."/>
            <person name="Enju A."/>
            <person name="Kamiya A."/>
            <person name="Narusaka M."/>
            <person name="Shin-i T."/>
            <person name="Nakagawa M."/>
            <person name="Sakamoto N."/>
            <person name="Oishi K."/>
            <person name="Kohara Y."/>
            <person name="Kobayashi M."/>
            <person name="Toyoda A."/>
            <person name="Sakaki Y."/>
            <person name="Sakurai T."/>
            <person name="Iida K."/>
            <person name="Akiyama K."/>
            <person name="Satou M."/>
            <person name="Toyoda T."/>
            <person name="Konagaya A."/>
            <person name="Carninci P."/>
            <person name="Kawai J."/>
            <person name="Hayashizaki Y."/>
            <person name="Shinozaki K."/>
        </authorList>
    </citation>
    <scope>NUCLEOTIDE SEQUENCE [LARGE SCALE MRNA]</scope>
    <source>
        <strain>cv. Columbia</strain>
    </source>
</reference>
<reference key="6">
    <citation type="journal article" date="2006" name="FEBS Lett.">
        <title>Arabidopsis KRPs have distinct inhibitory activity toward cyclin D2-associated kinases, including plant-specific B-type cyclin-dependent kinase.</title>
        <authorList>
            <person name="Nakai T."/>
            <person name="Kato K."/>
            <person name="Shinmyo A."/>
            <person name="Sekine M."/>
        </authorList>
    </citation>
    <scope>FUNCTION</scope>
</reference>
<reference key="7">
    <citation type="journal article" date="2007" name="Plant Cell Rep.">
        <title>Arabidopsis cyclin-dependent kinase inhibitors are nuclear-localized and show different localization patterns within the nucleoplasm.</title>
        <authorList>
            <person name="Bird D.A."/>
            <person name="Buruiana M.M."/>
            <person name="Zhou Y."/>
            <person name="Fowke L.C."/>
            <person name="Wang H."/>
        </authorList>
    </citation>
    <scope>SUBCELLULAR LOCATION</scope>
</reference>
<dbReference type="EMBL" id="AJ301556">
    <property type="protein sequence ID" value="CAC41619.1"/>
    <property type="molecule type" value="mRNA"/>
</dbReference>
<dbReference type="EMBL" id="AB028609">
    <property type="protein sequence ID" value="BAB02891.1"/>
    <property type="molecule type" value="Genomic_DNA"/>
</dbReference>
<dbReference type="EMBL" id="CP002686">
    <property type="protein sequence ID" value="AEE76949.1"/>
    <property type="molecule type" value="Genomic_DNA"/>
</dbReference>
<dbReference type="EMBL" id="BT025751">
    <property type="protein sequence ID" value="ABF83641.1"/>
    <property type="molecule type" value="mRNA"/>
</dbReference>
<dbReference type="EMBL" id="AK228811">
    <property type="protein sequence ID" value="BAF00707.1"/>
    <property type="molecule type" value="mRNA"/>
</dbReference>
<dbReference type="RefSeq" id="NP_189125.1">
    <property type="nucleotide sequence ID" value="NM_113393.3"/>
</dbReference>
<dbReference type="SMR" id="Q9LRY0"/>
<dbReference type="BioGRID" id="7410">
    <property type="interactions" value="17"/>
</dbReference>
<dbReference type="FunCoup" id="Q9LRY0">
    <property type="interactions" value="19"/>
</dbReference>
<dbReference type="IntAct" id="Q9LRY0">
    <property type="interactions" value="10"/>
</dbReference>
<dbReference type="STRING" id="3702.Q9LRY0"/>
<dbReference type="PaxDb" id="3702-AT3G24810.1"/>
<dbReference type="ProteomicsDB" id="250703"/>
<dbReference type="EnsemblPlants" id="AT3G24810.1">
    <property type="protein sequence ID" value="AT3G24810.1"/>
    <property type="gene ID" value="AT3G24810"/>
</dbReference>
<dbReference type="GeneID" id="822079"/>
<dbReference type="Gramene" id="AT3G24810.1">
    <property type="protein sequence ID" value="AT3G24810.1"/>
    <property type="gene ID" value="AT3G24810"/>
</dbReference>
<dbReference type="KEGG" id="ath:AT3G24810"/>
<dbReference type="Araport" id="AT3G24810"/>
<dbReference type="TAIR" id="AT3G24810">
    <property type="gene designation" value="ICK3"/>
</dbReference>
<dbReference type="eggNOG" id="ENOG502QXA1">
    <property type="taxonomic scope" value="Eukaryota"/>
</dbReference>
<dbReference type="HOGENOM" id="CLU_083146_0_0_1"/>
<dbReference type="InParanoid" id="Q9LRY0"/>
<dbReference type="OMA" id="CGDNERI"/>
<dbReference type="PhylomeDB" id="Q9LRY0"/>
<dbReference type="PRO" id="PR:Q9LRY0"/>
<dbReference type="Proteomes" id="UP000006548">
    <property type="component" value="Chromosome 3"/>
</dbReference>
<dbReference type="ExpressionAtlas" id="Q9LRY0">
    <property type="expression patterns" value="baseline and differential"/>
</dbReference>
<dbReference type="GO" id="GO:0005654">
    <property type="term" value="C:nucleoplasm"/>
    <property type="evidence" value="ECO:0007669"/>
    <property type="project" value="UniProtKB-SubCell"/>
</dbReference>
<dbReference type="GO" id="GO:0031490">
    <property type="term" value="F:chromatin DNA binding"/>
    <property type="evidence" value="ECO:0000314"/>
    <property type="project" value="CACAO"/>
</dbReference>
<dbReference type="GO" id="GO:0004861">
    <property type="term" value="F:cyclin-dependent protein serine/threonine kinase inhibitor activity"/>
    <property type="evidence" value="ECO:0007669"/>
    <property type="project" value="InterPro"/>
</dbReference>
<dbReference type="GO" id="GO:0045736">
    <property type="term" value="P:negative regulation of cyclin-dependent protein serine/threonine kinase activity"/>
    <property type="evidence" value="ECO:0000314"/>
    <property type="project" value="TAIR"/>
</dbReference>
<dbReference type="GO" id="GO:0032877">
    <property type="term" value="P:positive regulation of DNA endoreduplication"/>
    <property type="evidence" value="ECO:0000315"/>
    <property type="project" value="CACAO"/>
</dbReference>
<dbReference type="FunFam" id="4.10.365.10:FF:000004">
    <property type="entry name" value="Cyclin-dependent kinase inhibitor 4"/>
    <property type="match status" value="1"/>
</dbReference>
<dbReference type="Gene3D" id="4.10.365.10">
    <property type="entry name" value="p27"/>
    <property type="match status" value="1"/>
</dbReference>
<dbReference type="InterPro" id="IPR003175">
    <property type="entry name" value="CDI_dom"/>
</dbReference>
<dbReference type="InterPro" id="IPR044898">
    <property type="entry name" value="CDI_dom_sf"/>
</dbReference>
<dbReference type="InterPro" id="IPR044275">
    <property type="entry name" value="KRP"/>
</dbReference>
<dbReference type="PANTHER" id="PTHR46776">
    <property type="entry name" value="CYCLIN-DEPENDENT KINASE INHIBITOR 4-RELATED"/>
    <property type="match status" value="1"/>
</dbReference>
<dbReference type="Pfam" id="PF02234">
    <property type="entry name" value="CDI"/>
    <property type="match status" value="1"/>
</dbReference>
<dbReference type="PIRSF" id="PIRSF017811">
    <property type="entry name" value="CDK_inhib_pln"/>
    <property type="match status" value="1"/>
</dbReference>
<accession>Q9LRY0</accession>
<proteinExistence type="evidence at protein level"/>
<feature type="chain" id="PRO_0000294089" description="Cyclin-dependent kinase inhibitor 5">
    <location>
        <begin position="1"/>
        <end position="189"/>
    </location>
</feature>
<feature type="region of interest" description="Disordered" evidence="1">
    <location>
        <begin position="73"/>
        <end position="107"/>
    </location>
</feature>
<feature type="compositionally biased region" description="Polar residues" evidence="1">
    <location>
        <begin position="73"/>
        <end position="93"/>
    </location>
</feature>
<gene>
    <name type="primary">KRP5</name>
    <name type="synonym">ICK3</name>
    <name type="ordered locus">At3g24810</name>
    <name type="ORF">K7P8.10</name>
</gene>
<organism>
    <name type="scientific">Arabidopsis thaliana</name>
    <name type="common">Mouse-ear cress</name>
    <dbReference type="NCBI Taxonomy" id="3702"/>
    <lineage>
        <taxon>Eukaryota</taxon>
        <taxon>Viridiplantae</taxon>
        <taxon>Streptophyta</taxon>
        <taxon>Embryophyta</taxon>
        <taxon>Tracheophyta</taxon>
        <taxon>Spermatophyta</taxon>
        <taxon>Magnoliopsida</taxon>
        <taxon>eudicotyledons</taxon>
        <taxon>Gunneridae</taxon>
        <taxon>Pentapetalae</taxon>
        <taxon>rosids</taxon>
        <taxon>malvids</taxon>
        <taxon>Brassicales</taxon>
        <taxon>Brassicaceae</taxon>
        <taxon>Camelineae</taxon>
        <taxon>Arabidopsis</taxon>
    </lineage>
</organism>
<comment type="function">
    <text evidence="3">Inhibits CYCD2-1/CDKA-1 complex kinase activity without interaction with the complex.</text>
</comment>
<comment type="subunit">
    <text evidence="2">Interacts with CYCD4-1. Does not interact with CDKA-1.</text>
</comment>
<comment type="interaction">
    <interactant intactId="EBI-1636764">
        <id>Q9LRY0</id>
    </interactant>
    <interactant intactId="EBI-371713">
        <id>P24100</id>
        <label>CDKA-1</label>
    </interactant>
    <organismsDiffer>false</organismsDiffer>
    <experiments>3</experiments>
</comment>
<comment type="subcellular location">
    <subcellularLocation>
        <location evidence="4">Nucleus</location>
        <location evidence="4">Nucleoplasm</location>
    </subcellularLocation>
    <text>Distributed in a ponctuate pattern.</text>
</comment>
<comment type="tissue specificity">
    <text evidence="2">Expressed in flowers and at lower levels in roots and leaves.</text>
</comment>
<comment type="similarity">
    <text evidence="5">Belongs to the CDI family. ICK/KRP subfamily.</text>
</comment>
<keyword id="KW-0131">Cell cycle</keyword>
<keyword id="KW-0539">Nucleus</keyword>
<keyword id="KW-0649">Protein kinase inhibitor</keyword>
<keyword id="KW-1185">Reference proteome</keyword>
<sequence>MGKYIKKSKVAGAVSVKDKSHPPALGFRTRAAAAKNLALHRLRSHSDEADSFNYLQLRSRRLVKLPLLTNTRKQQKQQLIPSVNQCQTKNPRASSGPAKKLEPDTTTEEACGDNERISRSDCNFGDKGFDLESENRSMISDSKSIQSEIEDFFASAEQQQQRFFIQKYNFDIVSDNPLPGRYEWVKVMP</sequence>